<gene>
    <name type="primary">MPK8</name>
    <name type="ordered locus">At1g18150</name>
    <name type="ORF">T10F20.15</name>
    <name type="ORF">T10O22.12</name>
</gene>
<dbReference type="EC" id="2.7.11.24"/>
<dbReference type="EMBL" id="AB038693">
    <property type="protein sequence ID" value="BAA92222.1"/>
    <property type="status" value="ALT_FRAME"/>
    <property type="molecule type" value="mRNA"/>
</dbReference>
<dbReference type="EMBL" id="AC034107">
    <property type="protein sequence ID" value="AAF97831.1"/>
    <property type="molecule type" value="Genomic_DNA"/>
</dbReference>
<dbReference type="EMBL" id="AC069551">
    <property type="protein sequence ID" value="AAF78388.1"/>
    <property type="status" value="ALT_SEQ"/>
    <property type="molecule type" value="Genomic_DNA"/>
</dbReference>
<dbReference type="EMBL" id="CP002684">
    <property type="protein sequence ID" value="AEE29679.1"/>
    <property type="molecule type" value="Genomic_DNA"/>
</dbReference>
<dbReference type="EMBL" id="CP002684">
    <property type="protein sequence ID" value="AEE29680.1"/>
    <property type="molecule type" value="Genomic_DNA"/>
</dbReference>
<dbReference type="EMBL" id="CP002684">
    <property type="protein sequence ID" value="AEE29681.1"/>
    <property type="molecule type" value="Genomic_DNA"/>
</dbReference>
<dbReference type="EMBL" id="AY045931">
    <property type="protein sequence ID" value="AAK76605.1"/>
    <property type="molecule type" value="mRNA"/>
</dbReference>
<dbReference type="EMBL" id="AY142618">
    <property type="protein sequence ID" value="AAN13187.1"/>
    <property type="molecule type" value="mRNA"/>
</dbReference>
<dbReference type="RefSeq" id="NP_001185027.1">
    <property type="nucleotide sequence ID" value="NM_001198098.1"/>
</dbReference>
<dbReference type="RefSeq" id="NP_173253.1">
    <property type="nucleotide sequence ID" value="NM_101675.4"/>
</dbReference>
<dbReference type="RefSeq" id="NP_849685.1">
    <property type="nucleotide sequence ID" value="NM_179354.3"/>
</dbReference>
<dbReference type="SMR" id="Q9LM33"/>
<dbReference type="BioGRID" id="23633">
    <property type="interactions" value="43"/>
</dbReference>
<dbReference type="FunCoup" id="Q9LM33">
    <property type="interactions" value="342"/>
</dbReference>
<dbReference type="IntAct" id="Q9LM33">
    <property type="interactions" value="1"/>
</dbReference>
<dbReference type="STRING" id="3702.Q9LM33"/>
<dbReference type="iPTMnet" id="Q9LM33"/>
<dbReference type="PaxDb" id="3702-AT1G18150.3"/>
<dbReference type="ProteomicsDB" id="239069"/>
<dbReference type="EnsemblPlants" id="AT1G18150.1">
    <property type="protein sequence ID" value="AT1G18150.1"/>
    <property type="gene ID" value="AT1G18150"/>
</dbReference>
<dbReference type="EnsemblPlants" id="AT1G18150.2">
    <property type="protein sequence ID" value="AT1G18150.2"/>
    <property type="gene ID" value="AT1G18150"/>
</dbReference>
<dbReference type="EnsemblPlants" id="AT1G18150.3">
    <property type="protein sequence ID" value="AT1G18150.3"/>
    <property type="gene ID" value="AT1G18150"/>
</dbReference>
<dbReference type="GeneID" id="838394"/>
<dbReference type="Gramene" id="AT1G18150.1">
    <property type="protein sequence ID" value="AT1G18150.1"/>
    <property type="gene ID" value="AT1G18150"/>
</dbReference>
<dbReference type="Gramene" id="AT1G18150.2">
    <property type="protein sequence ID" value="AT1G18150.2"/>
    <property type="gene ID" value="AT1G18150"/>
</dbReference>
<dbReference type="Gramene" id="AT1G18150.3">
    <property type="protein sequence ID" value="AT1G18150.3"/>
    <property type="gene ID" value="AT1G18150"/>
</dbReference>
<dbReference type="KEGG" id="ath:AT1G18150"/>
<dbReference type="Araport" id="AT1G18150"/>
<dbReference type="TAIR" id="AT1G18150">
    <property type="gene designation" value="ATMPK8"/>
</dbReference>
<dbReference type="eggNOG" id="KOG0660">
    <property type="taxonomic scope" value="Eukaryota"/>
</dbReference>
<dbReference type="HOGENOM" id="CLU_000288_181_5_1"/>
<dbReference type="InParanoid" id="Q9LM33"/>
<dbReference type="OMA" id="HESSDYM"/>
<dbReference type="PhylomeDB" id="Q9LM33"/>
<dbReference type="PRO" id="PR:Q9LM33"/>
<dbReference type="Proteomes" id="UP000006548">
    <property type="component" value="Chromosome 1"/>
</dbReference>
<dbReference type="ExpressionAtlas" id="Q9LM33">
    <property type="expression patterns" value="baseline and differential"/>
</dbReference>
<dbReference type="GO" id="GO:0005524">
    <property type="term" value="F:ATP binding"/>
    <property type="evidence" value="ECO:0007669"/>
    <property type="project" value="UniProtKB-KW"/>
</dbReference>
<dbReference type="GO" id="GO:0005516">
    <property type="term" value="F:calmodulin binding"/>
    <property type="evidence" value="ECO:0000353"/>
    <property type="project" value="TAIR"/>
</dbReference>
<dbReference type="GO" id="GO:0004707">
    <property type="term" value="F:MAP kinase activity"/>
    <property type="evidence" value="ECO:0000250"/>
    <property type="project" value="TAIR"/>
</dbReference>
<dbReference type="GO" id="GO:0106310">
    <property type="term" value="F:protein serine kinase activity"/>
    <property type="evidence" value="ECO:0007669"/>
    <property type="project" value="RHEA"/>
</dbReference>
<dbReference type="GO" id="GO:0042542">
    <property type="term" value="P:response to hydrogen peroxide"/>
    <property type="evidence" value="ECO:0000270"/>
    <property type="project" value="TAIR"/>
</dbReference>
<dbReference type="GO" id="GO:0009753">
    <property type="term" value="P:response to jasmonic acid"/>
    <property type="evidence" value="ECO:0000270"/>
    <property type="project" value="TAIR"/>
</dbReference>
<dbReference type="GO" id="GO:0000302">
    <property type="term" value="P:response to reactive oxygen species"/>
    <property type="evidence" value="ECO:0000315"/>
    <property type="project" value="TAIR"/>
</dbReference>
<dbReference type="GO" id="GO:0009611">
    <property type="term" value="P:response to wounding"/>
    <property type="evidence" value="ECO:0000270"/>
    <property type="project" value="TAIR"/>
</dbReference>
<dbReference type="CDD" id="cd07859">
    <property type="entry name" value="STKc_TDY_MAPK"/>
    <property type="match status" value="1"/>
</dbReference>
<dbReference type="FunFam" id="1.10.510.10:FF:000017">
    <property type="entry name" value="Mitogen-activated protein kinase"/>
    <property type="match status" value="1"/>
</dbReference>
<dbReference type="FunFam" id="3.30.200.20:FF:000046">
    <property type="entry name" value="Mitogen-activated protein kinase"/>
    <property type="match status" value="1"/>
</dbReference>
<dbReference type="FunFam" id="3.30.200.20:FF:000578">
    <property type="entry name" value="Mitogen-activated protein kinase"/>
    <property type="match status" value="1"/>
</dbReference>
<dbReference type="Gene3D" id="3.30.200.20">
    <property type="entry name" value="Phosphorylase Kinase, domain 1"/>
    <property type="match status" value="1"/>
</dbReference>
<dbReference type="Gene3D" id="1.10.510.10">
    <property type="entry name" value="Transferase(Phosphotransferase) domain 1"/>
    <property type="match status" value="1"/>
</dbReference>
<dbReference type="InterPro" id="IPR011009">
    <property type="entry name" value="Kinase-like_dom_sf"/>
</dbReference>
<dbReference type="InterPro" id="IPR050117">
    <property type="entry name" value="MAP_kinase"/>
</dbReference>
<dbReference type="InterPro" id="IPR003527">
    <property type="entry name" value="MAP_kinase_CS"/>
</dbReference>
<dbReference type="InterPro" id="IPR000719">
    <property type="entry name" value="Prot_kinase_dom"/>
</dbReference>
<dbReference type="InterPro" id="IPR017441">
    <property type="entry name" value="Protein_kinase_ATP_BS"/>
</dbReference>
<dbReference type="PANTHER" id="PTHR24055">
    <property type="entry name" value="MITOGEN-ACTIVATED PROTEIN KINASE"/>
    <property type="match status" value="1"/>
</dbReference>
<dbReference type="Pfam" id="PF00069">
    <property type="entry name" value="Pkinase"/>
    <property type="match status" value="1"/>
</dbReference>
<dbReference type="SMART" id="SM00220">
    <property type="entry name" value="S_TKc"/>
    <property type="match status" value="1"/>
</dbReference>
<dbReference type="SUPFAM" id="SSF56112">
    <property type="entry name" value="Protein kinase-like (PK-like)"/>
    <property type="match status" value="1"/>
</dbReference>
<dbReference type="PROSITE" id="PS01351">
    <property type="entry name" value="MAPK"/>
    <property type="match status" value="1"/>
</dbReference>
<dbReference type="PROSITE" id="PS00107">
    <property type="entry name" value="PROTEIN_KINASE_ATP"/>
    <property type="match status" value="1"/>
</dbReference>
<dbReference type="PROSITE" id="PS50011">
    <property type="entry name" value="PROTEIN_KINASE_DOM"/>
    <property type="match status" value="1"/>
</dbReference>
<keyword id="KW-0067">ATP-binding</keyword>
<keyword id="KW-0418">Kinase</keyword>
<keyword id="KW-0547">Nucleotide-binding</keyword>
<keyword id="KW-0597">Phosphoprotein</keyword>
<keyword id="KW-1185">Reference proteome</keyword>
<keyword id="KW-0723">Serine/threonine-protein kinase</keyword>
<keyword id="KW-0808">Transferase</keyword>
<reference key="1">
    <citation type="submission" date="2000-02" db="EMBL/GenBank/DDBJ databases">
        <title>Arabidopsis thaliana mRNA for MAP kinase.</title>
        <authorList>
            <person name="Mizoguchi T."/>
            <person name="Ichimura K."/>
            <person name="Shinozaki K."/>
        </authorList>
    </citation>
    <scope>NUCLEOTIDE SEQUENCE [MRNA]</scope>
    <source>
        <strain>cv. Columbia</strain>
    </source>
</reference>
<reference key="2">
    <citation type="journal article" date="2000" name="Nature">
        <title>Sequence and analysis of chromosome 1 of the plant Arabidopsis thaliana.</title>
        <authorList>
            <person name="Theologis A."/>
            <person name="Ecker J.R."/>
            <person name="Palm C.J."/>
            <person name="Federspiel N.A."/>
            <person name="Kaul S."/>
            <person name="White O."/>
            <person name="Alonso J."/>
            <person name="Altafi H."/>
            <person name="Araujo R."/>
            <person name="Bowman C.L."/>
            <person name="Brooks S.Y."/>
            <person name="Buehler E."/>
            <person name="Chan A."/>
            <person name="Chao Q."/>
            <person name="Chen H."/>
            <person name="Cheuk R.F."/>
            <person name="Chin C.W."/>
            <person name="Chung M.K."/>
            <person name="Conn L."/>
            <person name="Conway A.B."/>
            <person name="Conway A.R."/>
            <person name="Creasy T.H."/>
            <person name="Dewar K."/>
            <person name="Dunn P."/>
            <person name="Etgu P."/>
            <person name="Feldblyum T.V."/>
            <person name="Feng J.-D."/>
            <person name="Fong B."/>
            <person name="Fujii C.Y."/>
            <person name="Gill J.E."/>
            <person name="Goldsmith A.D."/>
            <person name="Haas B."/>
            <person name="Hansen N.F."/>
            <person name="Hughes B."/>
            <person name="Huizar L."/>
            <person name="Hunter J.L."/>
            <person name="Jenkins J."/>
            <person name="Johnson-Hopson C."/>
            <person name="Khan S."/>
            <person name="Khaykin E."/>
            <person name="Kim C.J."/>
            <person name="Koo H.L."/>
            <person name="Kremenetskaia I."/>
            <person name="Kurtz D.B."/>
            <person name="Kwan A."/>
            <person name="Lam B."/>
            <person name="Langin-Hooper S."/>
            <person name="Lee A."/>
            <person name="Lee J.M."/>
            <person name="Lenz C.A."/>
            <person name="Li J.H."/>
            <person name="Li Y.-P."/>
            <person name="Lin X."/>
            <person name="Liu S.X."/>
            <person name="Liu Z.A."/>
            <person name="Luros J.S."/>
            <person name="Maiti R."/>
            <person name="Marziali A."/>
            <person name="Militscher J."/>
            <person name="Miranda M."/>
            <person name="Nguyen M."/>
            <person name="Nierman W.C."/>
            <person name="Osborne B.I."/>
            <person name="Pai G."/>
            <person name="Peterson J."/>
            <person name="Pham P.K."/>
            <person name="Rizzo M."/>
            <person name="Rooney T."/>
            <person name="Rowley D."/>
            <person name="Sakano H."/>
            <person name="Salzberg S.L."/>
            <person name="Schwartz J.R."/>
            <person name="Shinn P."/>
            <person name="Southwick A.M."/>
            <person name="Sun H."/>
            <person name="Tallon L.J."/>
            <person name="Tambunga G."/>
            <person name="Toriumi M.J."/>
            <person name="Town C.D."/>
            <person name="Utterback T."/>
            <person name="Van Aken S."/>
            <person name="Vaysberg M."/>
            <person name="Vysotskaia V.S."/>
            <person name="Walker M."/>
            <person name="Wu D."/>
            <person name="Yu G."/>
            <person name="Fraser C.M."/>
            <person name="Venter J.C."/>
            <person name="Davis R.W."/>
        </authorList>
    </citation>
    <scope>NUCLEOTIDE SEQUENCE [LARGE SCALE GENOMIC DNA]</scope>
    <source>
        <strain>cv. Columbia</strain>
    </source>
</reference>
<reference key="3">
    <citation type="journal article" date="2017" name="Plant J.">
        <title>Araport11: a complete reannotation of the Arabidopsis thaliana reference genome.</title>
        <authorList>
            <person name="Cheng C.Y."/>
            <person name="Krishnakumar V."/>
            <person name="Chan A.P."/>
            <person name="Thibaud-Nissen F."/>
            <person name="Schobel S."/>
            <person name="Town C.D."/>
        </authorList>
    </citation>
    <scope>GENOME REANNOTATION</scope>
    <source>
        <strain>cv. Columbia</strain>
    </source>
</reference>
<reference key="4">
    <citation type="journal article" date="2003" name="Science">
        <title>Empirical analysis of transcriptional activity in the Arabidopsis genome.</title>
        <authorList>
            <person name="Yamada K."/>
            <person name="Lim J."/>
            <person name="Dale J.M."/>
            <person name="Chen H."/>
            <person name="Shinn P."/>
            <person name="Palm C.J."/>
            <person name="Southwick A.M."/>
            <person name="Wu H.C."/>
            <person name="Kim C.J."/>
            <person name="Nguyen M."/>
            <person name="Pham P.K."/>
            <person name="Cheuk R.F."/>
            <person name="Karlin-Newmann G."/>
            <person name="Liu S.X."/>
            <person name="Lam B."/>
            <person name="Sakano H."/>
            <person name="Wu T."/>
            <person name="Yu G."/>
            <person name="Miranda M."/>
            <person name="Quach H.L."/>
            <person name="Tripp M."/>
            <person name="Chang C.H."/>
            <person name="Lee J.M."/>
            <person name="Toriumi M.J."/>
            <person name="Chan M.M."/>
            <person name="Tang C.C."/>
            <person name="Onodera C.S."/>
            <person name="Deng J.M."/>
            <person name="Akiyama K."/>
            <person name="Ansari Y."/>
            <person name="Arakawa T."/>
            <person name="Banh J."/>
            <person name="Banno F."/>
            <person name="Bowser L."/>
            <person name="Brooks S.Y."/>
            <person name="Carninci P."/>
            <person name="Chao Q."/>
            <person name="Choy N."/>
            <person name="Enju A."/>
            <person name="Goldsmith A.D."/>
            <person name="Gurjal M."/>
            <person name="Hansen N.F."/>
            <person name="Hayashizaki Y."/>
            <person name="Johnson-Hopson C."/>
            <person name="Hsuan V.W."/>
            <person name="Iida K."/>
            <person name="Karnes M."/>
            <person name="Khan S."/>
            <person name="Koesema E."/>
            <person name="Ishida J."/>
            <person name="Jiang P.X."/>
            <person name="Jones T."/>
            <person name="Kawai J."/>
            <person name="Kamiya A."/>
            <person name="Meyers C."/>
            <person name="Nakajima M."/>
            <person name="Narusaka M."/>
            <person name="Seki M."/>
            <person name="Sakurai T."/>
            <person name="Satou M."/>
            <person name="Tamse R."/>
            <person name="Vaysberg M."/>
            <person name="Wallender E.K."/>
            <person name="Wong C."/>
            <person name="Yamamura Y."/>
            <person name="Yuan S."/>
            <person name="Shinozaki K."/>
            <person name="Davis R.W."/>
            <person name="Theologis A."/>
            <person name="Ecker J.R."/>
        </authorList>
    </citation>
    <scope>NUCLEOTIDE SEQUENCE [LARGE SCALE MRNA]</scope>
    <source>
        <strain>cv. Columbia</strain>
    </source>
</reference>
<reference key="5">
    <citation type="journal article" date="2002" name="Trends Plant Sci.">
        <title>Mitogen-activated protein kinase cascades in plants: a new nomenclature.</title>
        <authorList>
            <consortium name="MAPK group"/>
        </authorList>
    </citation>
    <scope>GENE FAMILY</scope>
    <scope>NOMENCLATURE</scope>
</reference>
<reference key="6">
    <citation type="journal article" date="2006" name="Trends Plant Sci.">
        <title>Ancient signals: comparative genomics of plant MAPK and MAPKK gene families.</title>
        <authorList>
            <person name="Hamel L.P."/>
            <person name="Nicole M.C."/>
            <person name="Sritubtim S."/>
            <person name="Morency M.J."/>
            <person name="Ellis M."/>
            <person name="Ehlting J."/>
            <person name="Beaudoin N."/>
            <person name="Barbazuk B."/>
            <person name="Klessig D."/>
            <person name="Lee J."/>
            <person name="Martin G."/>
            <person name="Mundy J."/>
            <person name="Ohashi Y."/>
            <person name="Scheel D."/>
            <person name="Sheen J."/>
            <person name="Xing T."/>
            <person name="Zhang S."/>
            <person name="Seguin A."/>
            <person name="Ellis B.E."/>
        </authorList>
    </citation>
    <scope>GENE FAMILY</scope>
</reference>
<reference key="7">
    <citation type="journal article" date="2011" name="Mol. Cell">
        <title>Calmodulin-dependent activation of MAP kinase for ROS homeostasis in Arabidopsis.</title>
        <authorList>
            <person name="Takahashi F."/>
            <person name="Mizoguchi T."/>
            <person name="Yoshida R."/>
            <person name="Ichimura K."/>
            <person name="Shinozaki K."/>
        </authorList>
    </citation>
    <scope>FUNCTION</scope>
    <scope>ACTIVITY REGULATION</scope>
    <scope>TISSUE SPECIFICITY</scope>
    <scope>DISRUPTION PHENOTYPE</scope>
    <scope>INTERACTION WITH CAM3; CAM4 AND CAM7</scope>
    <scope>AUTOPHOSPHORYLATION</scope>
    <scope>MUTAGENESIS OF LYS-133; LYS-134; THR-266 AND TYR-268</scope>
</reference>
<comment type="function">
    <text evidence="5">MKK3-MPK8 and CAMs-MPK8 modules negatively regulates ROS accumulation through controlling expression of the RBOHD gene during wounding.</text>
</comment>
<comment type="catalytic activity">
    <reaction>
        <text>L-seryl-[protein] + ATP = O-phospho-L-seryl-[protein] + ADP + H(+)</text>
        <dbReference type="Rhea" id="RHEA:17989"/>
        <dbReference type="Rhea" id="RHEA-COMP:9863"/>
        <dbReference type="Rhea" id="RHEA-COMP:11604"/>
        <dbReference type="ChEBI" id="CHEBI:15378"/>
        <dbReference type="ChEBI" id="CHEBI:29999"/>
        <dbReference type="ChEBI" id="CHEBI:30616"/>
        <dbReference type="ChEBI" id="CHEBI:83421"/>
        <dbReference type="ChEBI" id="CHEBI:456216"/>
        <dbReference type="EC" id="2.7.11.24"/>
    </reaction>
</comment>
<comment type="catalytic activity">
    <reaction>
        <text>L-threonyl-[protein] + ATP = O-phospho-L-threonyl-[protein] + ADP + H(+)</text>
        <dbReference type="Rhea" id="RHEA:46608"/>
        <dbReference type="Rhea" id="RHEA-COMP:11060"/>
        <dbReference type="Rhea" id="RHEA-COMP:11605"/>
        <dbReference type="ChEBI" id="CHEBI:15378"/>
        <dbReference type="ChEBI" id="CHEBI:30013"/>
        <dbReference type="ChEBI" id="CHEBI:30616"/>
        <dbReference type="ChEBI" id="CHEBI:61977"/>
        <dbReference type="ChEBI" id="CHEBI:456216"/>
        <dbReference type="EC" id="2.7.11.24"/>
    </reaction>
</comment>
<comment type="activity regulation">
    <text evidence="1 5">Activated by threonine and tyrosine phosphorylation (By similarity). Activated by two independent mechanisms, the binding of CAMs in a calcium-dependent manner and the phosphorylation by MAP kinase kinase MKK3. Activated in response to mechanical wounding, hydrogen peroxide and jasmonic acid (JA).</text>
</comment>
<comment type="subunit">
    <text evidence="5">Interacts with CAM3, CAM4 and CAM7 in an calcium-dependent manner.</text>
</comment>
<comment type="tissue specificity">
    <text evidence="5">Ubiquitous.</text>
</comment>
<comment type="domain">
    <text>The TXY motif contains the threonine and tyrosine residues whose phosphorylation activates the MAP kinases.</text>
</comment>
<comment type="PTM">
    <text evidence="1">Dually phosphorylated on Thr-266 and Tyr-268, which activates the enzyme (By similarity). Autophosphorylated.</text>
</comment>
<comment type="disruption phenotype">
    <text evidence="5">More susceptible to oxidative stress.</text>
</comment>
<comment type="similarity">
    <text evidence="6">Belongs to the protein kinase superfamily. CMGC Ser/Thr protein kinase family. MAP kinase subfamily.</text>
</comment>
<comment type="sequence caution" evidence="6">
    <conflict type="erroneous gene model prediction">
        <sequence resource="EMBL-CDS" id="AAF78388"/>
    </conflict>
</comment>
<comment type="sequence caution" evidence="6">
    <conflict type="frameshift">
        <sequence resource="EMBL-CDS" id="BAA92222"/>
    </conflict>
</comment>
<evidence type="ECO:0000250" key="1"/>
<evidence type="ECO:0000250" key="2">
    <source>
        <dbReference type="UniProtKB" id="Q39026"/>
    </source>
</evidence>
<evidence type="ECO:0000255" key="3">
    <source>
        <dbReference type="PROSITE-ProRule" id="PRU00159"/>
    </source>
</evidence>
<evidence type="ECO:0000256" key="4">
    <source>
        <dbReference type="SAM" id="MobiDB-lite"/>
    </source>
</evidence>
<evidence type="ECO:0000269" key="5">
    <source>
    </source>
</evidence>
<evidence type="ECO:0000305" key="6"/>
<organism>
    <name type="scientific">Arabidopsis thaliana</name>
    <name type="common">Mouse-ear cress</name>
    <dbReference type="NCBI Taxonomy" id="3702"/>
    <lineage>
        <taxon>Eukaryota</taxon>
        <taxon>Viridiplantae</taxon>
        <taxon>Streptophyta</taxon>
        <taxon>Embryophyta</taxon>
        <taxon>Tracheophyta</taxon>
        <taxon>Spermatophyta</taxon>
        <taxon>Magnoliopsida</taxon>
        <taxon>eudicotyledons</taxon>
        <taxon>Gunneridae</taxon>
        <taxon>Pentapetalae</taxon>
        <taxon>rosids</taxon>
        <taxon>malvids</taxon>
        <taxon>Brassicales</taxon>
        <taxon>Brassicaceae</taxon>
        <taxon>Camelineae</taxon>
        <taxon>Arabidopsis</taxon>
    </lineage>
</organism>
<accession>Q9LM33</accession>
<accession>Q9LMS2</accession>
<accession>Q9MB23</accession>
<sequence>MGGGGNLVDGVRRWLFQRPSSSSSSSSSNNNNNNHEQPIFNSSSFSSSSNPNHSANSGELIIEEDLDFSGLTLINVPKRNHLPMDPHKKGETEFFTEYGEANRYQIQEVVGKGSYGVVASAVDSHTGERVAIKKINDVFEHVSDATRILREIKLLRLLRHPDVVEIKHIMLPPSRREFRDIYVVFELMESDLHQVIKANDDLTPEHYQFFLYQLLRGLKYVHAANVFHRDLKPKNILANADCKLKICDFGLARVSFNDAPTAIFWTDYVATRWYRAPELCGSFFSKYTPAIDIWSVGCIFAEMLLGKPLFPGKNVVHQLDLMTDFLGTPPPESISRIRNEKARRYLSSMRKKQPVPFSHKFPKADPLALRLLERLLAFDPKDRASAEDALADPYFSGLSNSEREPTTQPISKLEFDFERKKLVKDDVRELIYREILEYHPQMLEEYLRGGDQLSFMYPSGVDRFKRQFAHLEENQGKPGAAGGGRSTALHRHHASLPRERVPAPNGETAEESSDVERRAAAAVASTLESEEADNGGGYSARNLMKSASISGSKCIGVQSKTDKEDTIAEEEDNETVAELTDKVASLHNS</sequence>
<name>MPK8_ARATH</name>
<protein>
    <recommendedName>
        <fullName>Mitogen-activated protein kinase 8</fullName>
        <shortName>AtMPK8</shortName>
        <shortName>MAP kinase 8</shortName>
        <ecNumber>2.7.11.24</ecNumber>
    </recommendedName>
</protein>
<feature type="chain" id="PRO_0000245808" description="Mitogen-activated protein kinase 8">
    <location>
        <begin position="1"/>
        <end position="589"/>
    </location>
</feature>
<feature type="domain" description="Protein kinase" evidence="3">
    <location>
        <begin position="104"/>
        <end position="395"/>
    </location>
</feature>
<feature type="region of interest" description="Disordered" evidence="4">
    <location>
        <begin position="18"/>
        <end position="56"/>
    </location>
</feature>
<feature type="region of interest" description="Disordered" evidence="4">
    <location>
        <begin position="474"/>
        <end position="589"/>
    </location>
</feature>
<feature type="short sequence motif" description="TXY">
    <location>
        <begin position="266"/>
        <end position="268"/>
    </location>
</feature>
<feature type="compositionally biased region" description="Low complexity" evidence="4">
    <location>
        <begin position="20"/>
        <end position="34"/>
    </location>
</feature>
<feature type="compositionally biased region" description="Low complexity" evidence="4">
    <location>
        <begin position="41"/>
        <end position="56"/>
    </location>
</feature>
<feature type="active site" description="Proton acceptor" evidence="3">
    <location>
        <position position="230"/>
    </location>
</feature>
<feature type="binding site" evidence="3">
    <location>
        <begin position="110"/>
        <end position="118"/>
    </location>
    <ligand>
        <name>ATP</name>
        <dbReference type="ChEBI" id="CHEBI:30616"/>
    </ligand>
</feature>
<feature type="binding site" evidence="3">
    <location>
        <position position="133"/>
    </location>
    <ligand>
        <name>ATP</name>
        <dbReference type="ChEBI" id="CHEBI:30616"/>
    </ligand>
</feature>
<feature type="modified residue" description="Phosphothreonine" evidence="2">
    <location>
        <position position="266"/>
    </location>
</feature>
<feature type="modified residue" description="Phosphotyrosine" evidence="2">
    <location>
        <position position="268"/>
    </location>
</feature>
<feature type="modified residue" description="Phosphothreonine" evidence="2">
    <location>
        <position position="271"/>
    </location>
</feature>
<feature type="mutagenesis site" description="Abolishes CAM4-dependent activity." evidence="5">
    <original>K</original>
    <variation>M</variation>
    <location>
        <position position="133"/>
    </location>
</feature>
<feature type="mutagenesis site" description="Abolishes CAM4-dependent activity." evidence="5">
    <original>K</original>
    <variation>R</variation>
    <location>
        <position position="134"/>
    </location>
</feature>
<feature type="mutagenesis site" description="Do not affect CAM4-dependent activity; when associated with F-268." evidence="5">
    <original>T</original>
    <variation>A</variation>
    <location>
        <position position="266"/>
    </location>
</feature>
<feature type="mutagenesis site" description="Do not affect CAM4-dependent activity; when associated with A-266." evidence="5">
    <original>Y</original>
    <variation>F</variation>
    <location>
        <position position="268"/>
    </location>
</feature>
<feature type="sequence conflict" description="In Ref. 1; BAA92222." evidence="6" ref="1">
    <original>RD</original>
    <variation>PH</variation>
    <location>
        <begin position="179"/>
        <end position="180"/>
    </location>
</feature>
<feature type="sequence conflict" description="In Ref. 1; BAA92222." evidence="6" ref="1">
    <original>D</original>
    <variation>E</variation>
    <location>
        <position position="365"/>
    </location>
</feature>
<feature type="sequence conflict" description="In Ref. 1; BAA92222." evidence="6" ref="1">
    <original>I</original>
    <variation>L</variation>
    <location>
        <position position="431"/>
    </location>
</feature>
<feature type="sequence conflict" description="In Ref. 1; BAA92222." evidence="6" ref="1">
    <original>G</original>
    <variation>V</variation>
    <location>
        <position position="479"/>
    </location>
</feature>
<proteinExistence type="evidence at protein level"/>